<protein>
    <recommendedName>
        <fullName>Calpain-3</fullName>
        <ecNumber>3.4.22.54</ecNumber>
    </recommendedName>
    <alternativeName>
        <fullName>Calcium-activated neutral proteinase 3</fullName>
        <shortName>CANP 3</shortName>
    </alternativeName>
    <alternativeName>
        <fullName>Calpain L3</fullName>
    </alternativeName>
    <alternativeName>
        <fullName>Calpain p94</fullName>
    </alternativeName>
    <alternativeName>
        <fullName>Muscle-specific calcium-activated neutral protease 3</fullName>
    </alternativeName>
    <alternativeName>
        <fullName>New calpain 1</fullName>
        <shortName>nCL-1</shortName>
    </alternativeName>
</protein>
<sequence>MPTVISASMAPRTGASQVPRTMPQAAQGKGTEAGVGNPGGKYSAIISRNFPIIGVKEKTFEQLHKKCLEKKVLYLDPEFPPDETSLFYSQKFPIQFVWKRPPEICENPRFIIGGANRTDICQGDLGDCWFLAAIACLTLNKRLLFRVIPHDQSFTENYAGIFHFQFWRYGDWVDVVIDDCLPTYNNQLVFTKSNHRNEFWSALLEKAYAKLHGSYEALKGGNTTEAMEDFTGGVTEFFEIKDAPRDMYKIMKKAIERGSLMGCSIDDGTNMTYGTSPSGLKMGDLIARMVRNMDESRLRDSDLIPEGCSDDRPTRTIVPVQFETRMACGLVKGHAYSVTGLEEALFKGEKVKLVRLRNPWGQVEWNGSWSDSWKDWSFVDKDEKARLQHQVTEDGEFWMSYDDFIYHFTKLEICNLTADALESDKLQTWTVSVNEGRWVRGCSAGGCRNFPDTFWTNPQYRLKLLEEDDDPDDSEVICSFLVALMQKNRRKDRKLGANLFTIGFAIYEVPKEMHGNKQHLQKDFFLYNASKARSRTYINMREVSERFRLPPSEYVIVPSTYEPHQEGEFILRVFSEKRNLSEEVENTISVDRPVRKKKTKPIIFVSDRANSNKELGVDQESEEGQDKTSPDKQEKSPKPEPSNTDQESEEQQQFRNIFRQIAGDDMEICADELKNVLNRVVNKHKDLKTEGFTLESCRSMIALMDTDGSGRLNLQEFHHLWKKIKSWQKIFKHYDTDQSGTINSYEMRNAVNDAGFHLNNQLYDIITMRYADKYMNIDFDSFICCFVRLEGMFRAFNAFDKDGDGIIKLNVLEWLQLTMYA</sequence>
<comment type="function">
    <text evidence="1">Calcium-regulated non-lysosomal thiol-protease. Proteolytically cleaves CTBP1. Mediates, with UTP25, the proteasome-independent degradation of p53/TP53.</text>
</comment>
<comment type="catalytic activity">
    <reaction>
        <text>Broad endopeptidase activity.</text>
        <dbReference type="EC" id="3.4.22.54"/>
    </reaction>
</comment>
<comment type="activity regulation">
    <text>Activated by micromolar concentrations of calcium and inhibited by calpastatin.</text>
</comment>
<comment type="subunit">
    <text evidence="1">Homodimer; via EF-hand domain 4. Interacts with TTN/titin. Interacts with CMYA5; this interaction, which results in CMYA5 proteolysis, may protect CAPN3 from autolysis. Interacts with SIMC1. Interacts with UTP25; the interaction is required for CAPN3 translocation to the nucleolus.</text>
</comment>
<comment type="subcellular location">
    <subcellularLocation>
        <location evidence="1">Cytoplasm</location>
    </subcellularLocation>
    <subcellularLocation>
        <location evidence="1">Nucleus</location>
        <location evidence="1">Nucleolus</location>
    </subcellularLocation>
</comment>
<comment type="tissue specificity">
    <text>Skeletal muscle.</text>
</comment>
<comment type="similarity">
    <text evidence="5">Belongs to the peptidase C2 family.</text>
</comment>
<evidence type="ECO:0000250" key="1">
    <source>
        <dbReference type="UniProtKB" id="P20807"/>
    </source>
</evidence>
<evidence type="ECO:0000255" key="2">
    <source>
        <dbReference type="PROSITE-ProRule" id="PRU00239"/>
    </source>
</evidence>
<evidence type="ECO:0000255" key="3">
    <source>
        <dbReference type="PROSITE-ProRule" id="PRU00448"/>
    </source>
</evidence>
<evidence type="ECO:0000256" key="4">
    <source>
        <dbReference type="SAM" id="MobiDB-lite"/>
    </source>
</evidence>
<evidence type="ECO:0000305" key="5"/>
<organism>
    <name type="scientific">Sus scrofa</name>
    <name type="common">Pig</name>
    <dbReference type="NCBI Taxonomy" id="9823"/>
    <lineage>
        <taxon>Eukaryota</taxon>
        <taxon>Metazoa</taxon>
        <taxon>Chordata</taxon>
        <taxon>Craniata</taxon>
        <taxon>Vertebrata</taxon>
        <taxon>Euteleostomi</taxon>
        <taxon>Mammalia</taxon>
        <taxon>Eutheria</taxon>
        <taxon>Laurasiatheria</taxon>
        <taxon>Artiodactyla</taxon>
        <taxon>Suina</taxon>
        <taxon>Suidae</taxon>
        <taxon>Sus</taxon>
    </lineage>
</organism>
<feature type="chain" id="PRO_0000207709" description="Calpain-3">
    <location>
        <begin position="1"/>
        <end position="821"/>
    </location>
</feature>
<feature type="domain" description="Calpain catalytic" evidence="2">
    <location>
        <begin position="73"/>
        <end position="417"/>
    </location>
</feature>
<feature type="domain" description="EF-hand 1" evidence="3">
    <location>
        <begin position="649"/>
        <end position="683"/>
    </location>
</feature>
<feature type="domain" description="EF-hand 2" evidence="3">
    <location>
        <begin position="692"/>
        <end position="725"/>
    </location>
</feature>
<feature type="domain" description="EF-hand 3" evidence="3">
    <location>
        <begin position="722"/>
        <end position="757"/>
    </location>
</feature>
<feature type="domain" description="EF-hand 4" evidence="3">
    <location>
        <begin position="787"/>
        <end position="821"/>
    </location>
</feature>
<feature type="region of interest" description="Disordered" evidence="4">
    <location>
        <begin position="1"/>
        <end position="34"/>
    </location>
</feature>
<feature type="region of interest" description="Domain III">
    <location>
        <begin position="418"/>
        <end position="586"/>
    </location>
</feature>
<feature type="region of interest" description="Linker">
    <location>
        <begin position="587"/>
        <end position="649"/>
    </location>
</feature>
<feature type="region of interest" description="Disordered" evidence="4">
    <location>
        <begin position="603"/>
        <end position="652"/>
    </location>
</feature>
<feature type="region of interest" description="Domain IV">
    <location>
        <begin position="650"/>
        <end position="821"/>
    </location>
</feature>
<feature type="compositionally biased region" description="Basic and acidic residues" evidence="4">
    <location>
        <begin position="624"/>
        <end position="638"/>
    </location>
</feature>
<feature type="compositionally biased region" description="Polar residues" evidence="4">
    <location>
        <begin position="641"/>
        <end position="652"/>
    </location>
</feature>
<feature type="active site" evidence="2">
    <location>
        <position position="128"/>
    </location>
</feature>
<feature type="active site" evidence="2">
    <location>
        <position position="334"/>
    </location>
</feature>
<feature type="active site" evidence="2">
    <location>
        <position position="358"/>
    </location>
</feature>
<feature type="binding site" evidence="1">
    <location>
        <position position="662"/>
    </location>
    <ligand>
        <name>Ca(2+)</name>
        <dbReference type="ChEBI" id="CHEBI:29108"/>
        <label>1</label>
    </ligand>
</feature>
<feature type="binding site" evidence="1">
    <location>
        <position position="665"/>
    </location>
    <ligand>
        <name>Ca(2+)</name>
        <dbReference type="ChEBI" id="CHEBI:29108"/>
        <label>1</label>
    </ligand>
</feature>
<feature type="binding site" evidence="1">
    <location>
        <position position="667"/>
    </location>
    <ligand>
        <name>Ca(2+)</name>
        <dbReference type="ChEBI" id="CHEBI:29108"/>
        <label>1</label>
    </ligand>
</feature>
<feature type="binding site" evidence="1">
    <location>
        <position position="672"/>
    </location>
    <ligand>
        <name>Ca(2+)</name>
        <dbReference type="ChEBI" id="CHEBI:29108"/>
        <label>1</label>
    </ligand>
</feature>
<feature type="binding site" evidence="3">
    <location>
        <position position="705"/>
    </location>
    <ligand>
        <name>Ca(2+)</name>
        <dbReference type="ChEBI" id="CHEBI:29108"/>
        <label>2</label>
    </ligand>
</feature>
<feature type="binding site" evidence="3">
    <location>
        <position position="707"/>
    </location>
    <ligand>
        <name>Ca(2+)</name>
        <dbReference type="ChEBI" id="CHEBI:29108"/>
        <label>2</label>
    </ligand>
</feature>
<feature type="binding site" evidence="3">
    <location>
        <position position="709"/>
    </location>
    <ligand>
        <name>Ca(2+)</name>
        <dbReference type="ChEBI" id="CHEBI:29108"/>
        <label>2</label>
    </ligand>
</feature>
<feature type="binding site" evidence="3">
    <location>
        <position position="711"/>
    </location>
    <ligand>
        <name>Ca(2+)</name>
        <dbReference type="ChEBI" id="CHEBI:29108"/>
        <label>2</label>
    </ligand>
</feature>
<feature type="binding site" evidence="3">
    <location>
        <position position="716"/>
    </location>
    <ligand>
        <name>Ca(2+)</name>
        <dbReference type="ChEBI" id="CHEBI:29108"/>
        <label>2</label>
    </ligand>
</feature>
<feature type="binding site" evidence="3">
    <location>
        <position position="735"/>
    </location>
    <ligand>
        <name>Ca(2+)</name>
        <dbReference type="ChEBI" id="CHEBI:29108"/>
        <label>3</label>
    </ligand>
</feature>
<feature type="binding site" evidence="3">
    <location>
        <position position="737"/>
    </location>
    <ligand>
        <name>Ca(2+)</name>
        <dbReference type="ChEBI" id="CHEBI:29108"/>
        <label>3</label>
    </ligand>
</feature>
<feature type="binding site" evidence="3">
    <location>
        <position position="739"/>
    </location>
    <ligand>
        <name>Ca(2+)</name>
        <dbReference type="ChEBI" id="CHEBI:29108"/>
        <label>3</label>
    </ligand>
</feature>
<feature type="binding site" evidence="3">
    <location>
        <position position="741"/>
    </location>
    <ligand>
        <name>Ca(2+)</name>
        <dbReference type="ChEBI" id="CHEBI:29108"/>
        <label>3</label>
    </ligand>
</feature>
<feature type="binding site" evidence="3">
    <location>
        <position position="746"/>
    </location>
    <ligand>
        <name>Ca(2+)</name>
        <dbReference type="ChEBI" id="CHEBI:29108"/>
        <label>3</label>
    </ligand>
</feature>
<feature type="binding site" evidence="1">
    <location>
        <position position="800"/>
    </location>
    <ligand>
        <name>Ca(2+)</name>
        <dbReference type="ChEBI" id="CHEBI:29108"/>
        <label>4</label>
    </ligand>
</feature>
<feature type="binding site" evidence="1">
    <location>
        <position position="802"/>
    </location>
    <ligand>
        <name>Ca(2+)</name>
        <dbReference type="ChEBI" id="CHEBI:29108"/>
        <label>4</label>
    </ligand>
</feature>
<feature type="binding site" evidence="1">
    <location>
        <position position="804"/>
    </location>
    <ligand>
        <name>Ca(2+)</name>
        <dbReference type="ChEBI" id="CHEBI:29108"/>
        <label>4</label>
    </ligand>
</feature>
<feature type="binding site" evidence="1">
    <location>
        <position position="806"/>
    </location>
    <ligand>
        <name>Ca(2+)</name>
        <dbReference type="ChEBI" id="CHEBI:29108"/>
        <label>4</label>
    </ligand>
</feature>
<feature type="sequence conflict" description="In Ref. 2; AAA17032." evidence="5" ref="2">
    <original>K</original>
    <variation>N</variation>
    <location>
        <position position="281"/>
    </location>
</feature>
<feature type="sequence conflict" description="In Ref. 2; AAA17032." evidence="5" ref="2">
    <original>GC</original>
    <variation>V</variation>
    <location>
        <begin position="307"/>
        <end position="308"/>
    </location>
</feature>
<feature type="sequence conflict" description="In Ref. 2; AAA17032." evidence="5" ref="2">
    <original>GC</original>
    <variation>TG</variation>
    <location>
        <begin position="446"/>
        <end position="447"/>
    </location>
</feature>
<feature type="sequence conflict" description="In Ref. 3; AAA67685." evidence="5" ref="3">
    <original>G</original>
    <variation>A</variation>
    <location>
        <position position="446"/>
    </location>
</feature>
<feature type="sequence conflict" description="In Ref. 2; AAA17032." evidence="5" ref="2">
    <original>K</original>
    <variation>R</variation>
    <location>
        <position position="487"/>
    </location>
</feature>
<feature type="sequence conflict" description="In Ref. 2; AAA17032." evidence="5" ref="2">
    <original>I</original>
    <variation>M</variation>
    <location>
        <position position="570"/>
    </location>
</feature>
<feature type="sequence conflict" description="In Ref. 2; AAA17032." evidence="5" ref="2">
    <original>N</original>
    <variation>K</variation>
    <location>
        <position position="579"/>
    </location>
</feature>
<keyword id="KW-0106">Calcium</keyword>
<keyword id="KW-0963">Cytoplasm</keyword>
<keyword id="KW-0378">Hydrolase</keyword>
<keyword id="KW-0479">Metal-binding</keyword>
<keyword id="KW-0539">Nucleus</keyword>
<keyword id="KW-0645">Protease</keyword>
<keyword id="KW-1185">Reference proteome</keyword>
<keyword id="KW-0677">Repeat</keyword>
<keyword id="KW-0788">Thiol protease</keyword>
<accession>P43368</accession>
<accession>O46596</accession>
<accession>Q28961</accession>
<proteinExistence type="evidence at transcript level"/>
<gene>
    <name type="primary">CAPN3</name>
    <name type="synonym">NCL1</name>
</gene>
<reference key="1">
    <citation type="submission" date="1998-01" db="EMBL/GenBank/DDBJ databases">
        <title>Cloning the full length cDNA of pig skeletal muscle specific calpain by Polymerase Chain Reaction.</title>
        <authorList>
            <person name="Sun W."/>
            <person name="Muir M.W."/>
            <person name="Hancock D.L."/>
            <person name="Stuart J.J."/>
        </authorList>
    </citation>
    <scope>NUCLEOTIDE SEQUENCE</scope>
</reference>
<reference key="2">
    <citation type="submission" date="1994-01" db="EMBL/GenBank/DDBJ databases">
        <authorList>
            <person name="Ji S.Q."/>
            <person name="Hancock D.L."/>
            <person name="Bidwell C.A."/>
            <person name="Anderson D.B."/>
        </authorList>
    </citation>
    <scope>NUCLEOTIDE SEQUENCE OF 277-651</scope>
    <source>
        <tissue>Skeletal muscle</tissue>
    </source>
</reference>
<reference key="3">
    <citation type="journal article" date="1996" name="Mamm. Genome">
        <title>Chromosomal localization of the porcine skeletal muscle calpain gene.</title>
        <authorList>
            <person name="Briley G.P."/>
            <person name="Riggs P.K."/>
            <person name="Womack J.E."/>
            <person name="Hancock D.L."/>
            <person name="Bidwell C.A."/>
        </authorList>
    </citation>
    <scope>NUCLEOTIDE SEQUENCE [GENOMIC DNA] OF 372-509</scope>
    <source>
        <tissue>Blood</tissue>
    </source>
</reference>
<dbReference type="EC" id="3.4.22.54"/>
<dbReference type="EMBL" id="AF043295">
    <property type="protein sequence ID" value="AAB99847.1"/>
    <property type="molecule type" value="mRNA"/>
</dbReference>
<dbReference type="EMBL" id="U05678">
    <property type="protein sequence ID" value="AAA17032.1"/>
    <property type="molecule type" value="mRNA"/>
</dbReference>
<dbReference type="EMBL" id="U23954">
    <property type="protein sequence ID" value="AAA67685.1"/>
    <property type="molecule type" value="Genomic_DNA"/>
</dbReference>
<dbReference type="RefSeq" id="NP_999336.1">
    <property type="nucleotide sequence ID" value="NM_214171.1"/>
</dbReference>
<dbReference type="SMR" id="P43368"/>
<dbReference type="FunCoup" id="P43368">
    <property type="interactions" value="566"/>
</dbReference>
<dbReference type="STRING" id="9823.ENSSSCP00000073818"/>
<dbReference type="MEROPS" id="C02.004"/>
<dbReference type="PaxDb" id="9823-ENSSSCP00000005095"/>
<dbReference type="PeptideAtlas" id="P43368"/>
<dbReference type="GeneID" id="397349"/>
<dbReference type="KEGG" id="ssc:397349"/>
<dbReference type="CTD" id="825"/>
<dbReference type="eggNOG" id="KOG0045">
    <property type="taxonomic scope" value="Eukaryota"/>
</dbReference>
<dbReference type="InParanoid" id="P43368"/>
<dbReference type="OrthoDB" id="424753at2759"/>
<dbReference type="BRENDA" id="3.4.22.54">
    <property type="organism ID" value="6170"/>
</dbReference>
<dbReference type="Proteomes" id="UP000008227">
    <property type="component" value="Unplaced"/>
</dbReference>
<dbReference type="Proteomes" id="UP000314985">
    <property type="component" value="Unplaced"/>
</dbReference>
<dbReference type="Proteomes" id="UP000694570">
    <property type="component" value="Unplaced"/>
</dbReference>
<dbReference type="Proteomes" id="UP000694571">
    <property type="component" value="Unplaced"/>
</dbReference>
<dbReference type="Proteomes" id="UP000694720">
    <property type="component" value="Unplaced"/>
</dbReference>
<dbReference type="Proteomes" id="UP000694722">
    <property type="component" value="Unplaced"/>
</dbReference>
<dbReference type="Proteomes" id="UP000694723">
    <property type="component" value="Unplaced"/>
</dbReference>
<dbReference type="Proteomes" id="UP000694724">
    <property type="component" value="Unplaced"/>
</dbReference>
<dbReference type="Proteomes" id="UP000694725">
    <property type="component" value="Unplaced"/>
</dbReference>
<dbReference type="Proteomes" id="UP000694726">
    <property type="component" value="Unplaced"/>
</dbReference>
<dbReference type="Proteomes" id="UP000694727">
    <property type="component" value="Unplaced"/>
</dbReference>
<dbReference type="Proteomes" id="UP000694728">
    <property type="component" value="Unplaced"/>
</dbReference>
<dbReference type="GO" id="GO:0005737">
    <property type="term" value="C:cytoplasm"/>
    <property type="evidence" value="ECO:0000250"/>
    <property type="project" value="UniProtKB"/>
</dbReference>
<dbReference type="GO" id="GO:0005829">
    <property type="term" value="C:cytosol"/>
    <property type="evidence" value="ECO:0000250"/>
    <property type="project" value="UniProtKB"/>
</dbReference>
<dbReference type="GO" id="GO:0030016">
    <property type="term" value="C:myofibril"/>
    <property type="evidence" value="ECO:0000250"/>
    <property type="project" value="UniProtKB"/>
</dbReference>
<dbReference type="GO" id="GO:0005730">
    <property type="term" value="C:nucleolus"/>
    <property type="evidence" value="ECO:0000250"/>
    <property type="project" value="UniProtKB"/>
</dbReference>
<dbReference type="GO" id="GO:0005634">
    <property type="term" value="C:nucleus"/>
    <property type="evidence" value="ECO:0000250"/>
    <property type="project" value="UniProtKB"/>
</dbReference>
<dbReference type="GO" id="GO:0005886">
    <property type="term" value="C:plasma membrane"/>
    <property type="evidence" value="ECO:0000250"/>
    <property type="project" value="UniProtKB"/>
</dbReference>
<dbReference type="GO" id="GO:0032991">
    <property type="term" value="C:protein-containing complex"/>
    <property type="evidence" value="ECO:0000250"/>
    <property type="project" value="UniProtKB"/>
</dbReference>
<dbReference type="GO" id="GO:0030315">
    <property type="term" value="C:T-tubule"/>
    <property type="evidence" value="ECO:0000250"/>
    <property type="project" value="UniProtKB"/>
</dbReference>
<dbReference type="GO" id="GO:0030018">
    <property type="term" value="C:Z disc"/>
    <property type="evidence" value="ECO:0000250"/>
    <property type="project" value="UniProtKB"/>
</dbReference>
<dbReference type="GO" id="GO:0005509">
    <property type="term" value="F:calcium ion binding"/>
    <property type="evidence" value="ECO:0000250"/>
    <property type="project" value="UniProtKB"/>
</dbReference>
<dbReference type="GO" id="GO:0004198">
    <property type="term" value="F:calcium-dependent cysteine-type endopeptidase activity"/>
    <property type="evidence" value="ECO:0000250"/>
    <property type="project" value="UniProtKB"/>
</dbReference>
<dbReference type="GO" id="GO:0003824">
    <property type="term" value="F:catalytic activity"/>
    <property type="evidence" value="ECO:0000250"/>
    <property type="project" value="UniProtKB"/>
</dbReference>
<dbReference type="GO" id="GO:0055103">
    <property type="term" value="F:ligase regulator activity"/>
    <property type="evidence" value="ECO:0000250"/>
    <property type="project" value="UniProtKB"/>
</dbReference>
<dbReference type="GO" id="GO:0060090">
    <property type="term" value="F:molecular adaptor activity"/>
    <property type="evidence" value="ECO:0000250"/>
    <property type="project" value="UniProtKB"/>
</dbReference>
<dbReference type="GO" id="GO:0008233">
    <property type="term" value="F:peptidase activity"/>
    <property type="evidence" value="ECO:0000250"/>
    <property type="project" value="UniProtKB"/>
</dbReference>
<dbReference type="GO" id="GO:0031402">
    <property type="term" value="F:sodium ion binding"/>
    <property type="evidence" value="ECO:0000250"/>
    <property type="project" value="UniProtKB"/>
</dbReference>
<dbReference type="GO" id="GO:0008307">
    <property type="term" value="F:structural constituent of muscle"/>
    <property type="evidence" value="ECO:0000250"/>
    <property type="project" value="UniProtKB"/>
</dbReference>
<dbReference type="GO" id="GO:0031432">
    <property type="term" value="F:titin binding"/>
    <property type="evidence" value="ECO:0000250"/>
    <property type="project" value="UniProtKB"/>
</dbReference>
<dbReference type="GO" id="GO:1990092">
    <property type="term" value="P:calcium-dependent self proteolysis"/>
    <property type="evidence" value="ECO:0000250"/>
    <property type="project" value="UniProtKB"/>
</dbReference>
<dbReference type="GO" id="GO:0071277">
    <property type="term" value="P:cellular response to calcium ion"/>
    <property type="evidence" value="ECO:0000250"/>
    <property type="project" value="UniProtKB"/>
</dbReference>
<dbReference type="GO" id="GO:0071472">
    <property type="term" value="P:cellular response to salt stress"/>
    <property type="evidence" value="ECO:0000250"/>
    <property type="project" value="UniProtKB"/>
</dbReference>
<dbReference type="GO" id="GO:0061061">
    <property type="term" value="P:muscle structure development"/>
    <property type="evidence" value="ECO:0000250"/>
    <property type="project" value="UniProtKB"/>
</dbReference>
<dbReference type="GO" id="GO:0030239">
    <property type="term" value="P:myofibril assembly"/>
    <property type="evidence" value="ECO:0000250"/>
    <property type="project" value="UniProtKB"/>
</dbReference>
<dbReference type="GO" id="GO:0043066">
    <property type="term" value="P:negative regulation of apoptotic process"/>
    <property type="evidence" value="ECO:0000250"/>
    <property type="project" value="UniProtKB"/>
</dbReference>
<dbReference type="GO" id="GO:0045892">
    <property type="term" value="P:negative regulation of DNA-templated transcription"/>
    <property type="evidence" value="ECO:0000250"/>
    <property type="project" value="UniProtKB"/>
</dbReference>
<dbReference type="GO" id="GO:0033234">
    <property type="term" value="P:negative regulation of protein sumoylation"/>
    <property type="evidence" value="ECO:0000250"/>
    <property type="project" value="UniProtKB"/>
</dbReference>
<dbReference type="GO" id="GO:0045893">
    <property type="term" value="P:positive regulation of DNA-templated transcription"/>
    <property type="evidence" value="ECO:0000250"/>
    <property type="project" value="UniProtKB"/>
</dbReference>
<dbReference type="GO" id="GO:0045862">
    <property type="term" value="P:positive regulation of proteolysis"/>
    <property type="evidence" value="ECO:0000250"/>
    <property type="project" value="UniProtKB"/>
</dbReference>
<dbReference type="GO" id="GO:0051281">
    <property type="term" value="P:positive regulation of release of sequestered calcium ion into cytosol"/>
    <property type="evidence" value="ECO:0000250"/>
    <property type="project" value="UniProtKB"/>
</dbReference>
<dbReference type="GO" id="GO:0014718">
    <property type="term" value="P:positive regulation of satellite cell activation involved in skeletal muscle regeneration"/>
    <property type="evidence" value="ECO:0000250"/>
    <property type="project" value="UniProtKB"/>
</dbReference>
<dbReference type="GO" id="GO:0030163">
    <property type="term" value="P:protein catabolic process"/>
    <property type="evidence" value="ECO:0000250"/>
    <property type="project" value="UniProtKB"/>
</dbReference>
<dbReference type="GO" id="GO:0072657">
    <property type="term" value="P:protein localization to membrane"/>
    <property type="evidence" value="ECO:0000250"/>
    <property type="project" value="UniProtKB"/>
</dbReference>
<dbReference type="GO" id="GO:0065003">
    <property type="term" value="P:protein-containing complex assembly"/>
    <property type="evidence" value="ECO:0000250"/>
    <property type="project" value="UniProtKB"/>
</dbReference>
<dbReference type="GO" id="GO:0006508">
    <property type="term" value="P:proteolysis"/>
    <property type="evidence" value="ECO:0000250"/>
    <property type="project" value="UniProtKB"/>
</dbReference>
<dbReference type="GO" id="GO:0043122">
    <property type="term" value="P:regulation of canonical NF-kappaB signal transduction"/>
    <property type="evidence" value="ECO:0000250"/>
    <property type="project" value="UniProtKB"/>
</dbReference>
<dbReference type="GO" id="GO:0051592">
    <property type="term" value="P:response to calcium ion"/>
    <property type="evidence" value="ECO:0000250"/>
    <property type="project" value="UniProtKB"/>
</dbReference>
<dbReference type="GO" id="GO:0014850">
    <property type="term" value="P:response to muscle activity"/>
    <property type="evidence" value="ECO:0000250"/>
    <property type="project" value="UniProtKB"/>
</dbReference>
<dbReference type="GO" id="GO:0045214">
    <property type="term" value="P:sarcomere organization"/>
    <property type="evidence" value="ECO:0000250"/>
    <property type="project" value="UniProtKB"/>
</dbReference>
<dbReference type="GO" id="GO:0097264">
    <property type="term" value="P:self proteolysis"/>
    <property type="evidence" value="ECO:0000250"/>
    <property type="project" value="UniProtKB"/>
</dbReference>
<dbReference type="CDD" id="cd00214">
    <property type="entry name" value="Calpain_III"/>
    <property type="match status" value="1"/>
</dbReference>
<dbReference type="CDD" id="cd00044">
    <property type="entry name" value="CysPc"/>
    <property type="match status" value="1"/>
</dbReference>
<dbReference type="CDD" id="cd16190">
    <property type="entry name" value="EFh_PEF_CAPN3"/>
    <property type="match status" value="1"/>
</dbReference>
<dbReference type="FunFam" id="3.90.70.10:FF:000555">
    <property type="entry name" value="Calpain-3"/>
    <property type="match status" value="1"/>
</dbReference>
<dbReference type="FunFam" id="1.10.238.10:FF:000065">
    <property type="entry name" value="calpain-3 isoform X1"/>
    <property type="match status" value="1"/>
</dbReference>
<dbReference type="FunFam" id="2.60.120.380:FF:000002">
    <property type="entry name" value="calpain-3 isoform X1"/>
    <property type="match status" value="1"/>
</dbReference>
<dbReference type="Gene3D" id="2.60.120.380">
    <property type="match status" value="1"/>
</dbReference>
<dbReference type="Gene3D" id="3.90.70.10">
    <property type="entry name" value="Cysteine proteinases"/>
    <property type="match status" value="1"/>
</dbReference>
<dbReference type="Gene3D" id="1.10.238.10">
    <property type="entry name" value="EF-hand"/>
    <property type="match status" value="1"/>
</dbReference>
<dbReference type="InterPro" id="IPR033883">
    <property type="entry name" value="C2_III"/>
</dbReference>
<dbReference type="InterPro" id="IPR022684">
    <property type="entry name" value="Calpain_cysteine_protease"/>
</dbReference>
<dbReference type="InterPro" id="IPR022682">
    <property type="entry name" value="Calpain_domain_III"/>
</dbReference>
<dbReference type="InterPro" id="IPR022683">
    <property type="entry name" value="Calpain_III"/>
</dbReference>
<dbReference type="InterPro" id="IPR036213">
    <property type="entry name" value="Calpain_III_sf"/>
</dbReference>
<dbReference type="InterPro" id="IPR054069">
    <property type="entry name" value="CAPN3/13-like_C_EFh"/>
</dbReference>
<dbReference type="InterPro" id="IPR029531">
    <property type="entry name" value="CAPN3_PEF"/>
</dbReference>
<dbReference type="InterPro" id="IPR011992">
    <property type="entry name" value="EF-hand-dom_pair"/>
</dbReference>
<dbReference type="InterPro" id="IPR018247">
    <property type="entry name" value="EF_Hand_1_Ca_BS"/>
</dbReference>
<dbReference type="InterPro" id="IPR002048">
    <property type="entry name" value="EF_hand_dom"/>
</dbReference>
<dbReference type="InterPro" id="IPR038765">
    <property type="entry name" value="Papain-like_cys_pep_sf"/>
</dbReference>
<dbReference type="InterPro" id="IPR000169">
    <property type="entry name" value="Pept_cys_AS"/>
</dbReference>
<dbReference type="InterPro" id="IPR001300">
    <property type="entry name" value="Peptidase_C2_calpain_cat"/>
</dbReference>
<dbReference type="PANTHER" id="PTHR10183">
    <property type="entry name" value="CALPAIN"/>
    <property type="match status" value="1"/>
</dbReference>
<dbReference type="PANTHER" id="PTHR10183:SF329">
    <property type="entry name" value="CALPAIN-3"/>
    <property type="match status" value="1"/>
</dbReference>
<dbReference type="Pfam" id="PF01067">
    <property type="entry name" value="Calpain_III"/>
    <property type="match status" value="1"/>
</dbReference>
<dbReference type="Pfam" id="PF16648">
    <property type="entry name" value="Calpain_u2"/>
    <property type="match status" value="1"/>
</dbReference>
<dbReference type="Pfam" id="PF21875">
    <property type="entry name" value="CAPN13-like_C_EFh"/>
    <property type="match status" value="1"/>
</dbReference>
<dbReference type="Pfam" id="PF13833">
    <property type="entry name" value="EF-hand_8"/>
    <property type="match status" value="1"/>
</dbReference>
<dbReference type="Pfam" id="PF00648">
    <property type="entry name" value="Peptidase_C2"/>
    <property type="match status" value="1"/>
</dbReference>
<dbReference type="PRINTS" id="PR00704">
    <property type="entry name" value="CALPAIN"/>
</dbReference>
<dbReference type="SMART" id="SM00720">
    <property type="entry name" value="calpain_III"/>
    <property type="match status" value="1"/>
</dbReference>
<dbReference type="SMART" id="SM00230">
    <property type="entry name" value="CysPc"/>
    <property type="match status" value="1"/>
</dbReference>
<dbReference type="SMART" id="SM00054">
    <property type="entry name" value="EFh"/>
    <property type="match status" value="3"/>
</dbReference>
<dbReference type="SUPFAM" id="SSF49758">
    <property type="entry name" value="Calpain large subunit, middle domain (domain III)"/>
    <property type="match status" value="1"/>
</dbReference>
<dbReference type="SUPFAM" id="SSF54001">
    <property type="entry name" value="Cysteine proteinases"/>
    <property type="match status" value="1"/>
</dbReference>
<dbReference type="SUPFAM" id="SSF47473">
    <property type="entry name" value="EF-hand"/>
    <property type="match status" value="1"/>
</dbReference>
<dbReference type="PROSITE" id="PS50203">
    <property type="entry name" value="CALPAIN_CAT"/>
    <property type="match status" value="1"/>
</dbReference>
<dbReference type="PROSITE" id="PS00018">
    <property type="entry name" value="EF_HAND_1"/>
    <property type="match status" value="2"/>
</dbReference>
<dbReference type="PROSITE" id="PS50222">
    <property type="entry name" value="EF_HAND_2"/>
    <property type="match status" value="4"/>
</dbReference>
<dbReference type="PROSITE" id="PS00139">
    <property type="entry name" value="THIOL_PROTEASE_CYS"/>
    <property type="match status" value="1"/>
</dbReference>
<name>CAN3_PIG</name>